<comment type="function">
    <text evidence="1">Beta toxins bind voltage-independently at site-4 of sodium channels (Nav) and shift the voltage of activation toward more negative potentials thereby affecting sodium channel activation and promoting spontaneous and repetitive firing.</text>
</comment>
<comment type="subcellular location">
    <subcellularLocation>
        <location>Secreted</location>
    </subcellularLocation>
</comment>
<comment type="tissue specificity">
    <text>Expressed by the venom gland.</text>
</comment>
<comment type="domain">
    <text evidence="3">Has the structural arrangement of an alpha-helix connected to antiparallel beta-sheets by disulfide bonds (CS-alpha/beta).</text>
</comment>
<comment type="similarity">
    <text evidence="3">Belongs to the long (4 C-C) scorpion toxin superfamily. Sodium channel inhibitor family. Beta subfamily.</text>
</comment>
<evidence type="ECO:0000250" key="1"/>
<evidence type="ECO:0000255" key="2">
    <source>
        <dbReference type="PROSITE-ProRule" id="PRU01210"/>
    </source>
</evidence>
<evidence type="ECO:0000305" key="3"/>
<keyword id="KW-1015">Disulfide bond</keyword>
<keyword id="KW-0872">Ion channel impairing toxin</keyword>
<keyword id="KW-0528">Neurotoxin</keyword>
<keyword id="KW-0964">Secreted</keyword>
<keyword id="KW-0732">Signal</keyword>
<keyword id="KW-0800">Toxin</keyword>
<keyword id="KW-0738">Voltage-gated sodium channel impairing toxin</keyword>
<organism>
    <name type="scientific">Centruroides noxius</name>
    <name type="common">Mexican scorpion</name>
    <dbReference type="NCBI Taxonomy" id="6878"/>
    <lineage>
        <taxon>Eukaryota</taxon>
        <taxon>Metazoa</taxon>
        <taxon>Ecdysozoa</taxon>
        <taxon>Arthropoda</taxon>
        <taxon>Chelicerata</taxon>
        <taxon>Arachnida</taxon>
        <taxon>Scorpiones</taxon>
        <taxon>Buthida</taxon>
        <taxon>Buthoidea</taxon>
        <taxon>Buthidae</taxon>
        <taxon>Centruroides</taxon>
    </lineage>
</organism>
<reference key="1">
    <citation type="journal article" date="1993" name="Gene">
        <title>Cloning and characterization of cDNAs that code for Na(+)-channel-blocking toxins of the scorpion Centruroides noxius Hoffmann.</title>
        <authorList>
            <person name="Becerril B."/>
            <person name="Vazquez A."/>
            <person name="Garcia C."/>
            <person name="Corona M."/>
            <person name="Bolivar F."/>
            <person name="Possani L.D."/>
        </authorList>
    </citation>
    <scope>NUCLEOTIDE SEQUENCE [MRNA]</scope>
    <source>
        <tissue>Venom gland</tissue>
    </source>
</reference>
<accession>P45664</accession>
<dbReference type="EMBL" id="L05061">
    <property type="protein sequence ID" value="AAA28286.1"/>
    <property type="molecule type" value="mRNA"/>
</dbReference>
<dbReference type="PIR" id="JN0670">
    <property type="entry name" value="JN0670"/>
</dbReference>
<dbReference type="SMR" id="P45664"/>
<dbReference type="GO" id="GO:0005576">
    <property type="term" value="C:extracellular region"/>
    <property type="evidence" value="ECO:0007669"/>
    <property type="project" value="UniProtKB-SubCell"/>
</dbReference>
<dbReference type="GO" id="GO:0019871">
    <property type="term" value="F:sodium channel inhibitor activity"/>
    <property type="evidence" value="ECO:0007669"/>
    <property type="project" value="InterPro"/>
</dbReference>
<dbReference type="GO" id="GO:0090729">
    <property type="term" value="F:toxin activity"/>
    <property type="evidence" value="ECO:0007669"/>
    <property type="project" value="UniProtKB-KW"/>
</dbReference>
<dbReference type="GO" id="GO:0006952">
    <property type="term" value="P:defense response"/>
    <property type="evidence" value="ECO:0007669"/>
    <property type="project" value="InterPro"/>
</dbReference>
<dbReference type="CDD" id="cd23106">
    <property type="entry name" value="neurotoxins_LC_scorpion"/>
    <property type="match status" value="1"/>
</dbReference>
<dbReference type="FunFam" id="3.30.30.10:FF:000002">
    <property type="entry name" value="Alpha-like toxin BmK-M1"/>
    <property type="match status" value="1"/>
</dbReference>
<dbReference type="Gene3D" id="3.30.30.10">
    <property type="entry name" value="Knottin, scorpion toxin-like"/>
    <property type="match status" value="1"/>
</dbReference>
<dbReference type="InterPro" id="IPR044062">
    <property type="entry name" value="LCN-type_CS_alpha_beta_dom"/>
</dbReference>
<dbReference type="InterPro" id="IPR003614">
    <property type="entry name" value="Scorpion_toxin-like"/>
</dbReference>
<dbReference type="InterPro" id="IPR036574">
    <property type="entry name" value="Scorpion_toxin-like_sf"/>
</dbReference>
<dbReference type="InterPro" id="IPR018218">
    <property type="entry name" value="Scorpion_toxinL"/>
</dbReference>
<dbReference type="InterPro" id="IPR002061">
    <property type="entry name" value="Scorpion_toxinL/defensin"/>
</dbReference>
<dbReference type="Pfam" id="PF00537">
    <property type="entry name" value="Toxin_3"/>
    <property type="match status" value="1"/>
</dbReference>
<dbReference type="PRINTS" id="PR00285">
    <property type="entry name" value="SCORPNTOXIN"/>
</dbReference>
<dbReference type="SMART" id="SM00505">
    <property type="entry name" value="Knot1"/>
    <property type="match status" value="1"/>
</dbReference>
<dbReference type="SUPFAM" id="SSF57095">
    <property type="entry name" value="Scorpion toxin-like"/>
    <property type="match status" value="1"/>
</dbReference>
<dbReference type="PROSITE" id="PS51863">
    <property type="entry name" value="LCN_CSAB"/>
    <property type="match status" value="1"/>
</dbReference>
<name>SCXX_CENNO</name>
<proteinExistence type="evidence at transcript level"/>
<feature type="signal peptide" evidence="1">
    <location>
        <begin position="1"/>
        <end position="19"/>
    </location>
</feature>
<feature type="chain" id="PRO_0000035284" description="Toxin CngtIII">
    <location>
        <begin position="20"/>
        <end position="87"/>
    </location>
</feature>
<feature type="domain" description="LCN-type CS-alpha/beta" evidence="2">
    <location>
        <begin position="20"/>
        <end position="85"/>
    </location>
</feature>
<feature type="disulfide bond" evidence="2">
    <location>
        <begin position="31"/>
        <end position="84"/>
    </location>
</feature>
<feature type="disulfide bond" evidence="2">
    <location>
        <begin position="35"/>
        <end position="60"/>
    </location>
</feature>
<feature type="disulfide bond" evidence="2">
    <location>
        <begin position="44"/>
        <end position="65"/>
    </location>
</feature>
<feature type="disulfide bond" evidence="2">
    <location>
        <begin position="48"/>
        <end position="67"/>
    </location>
</feature>
<protein>
    <recommendedName>
        <fullName>Toxin CngtIII</fullName>
    </recommendedName>
</protein>
<sequence>MNSLLMITACLVLFGTVWAKEGYLVNKSTGCKYGCFWLGKNEGCDKECKAKNQGGSYGYCYAFGCWCEGLPESTPTYPLPNKTCSKK</sequence>